<sequence length="61" mass="7064">MSKHLRITLVKSLIGVAEKHRRVVAGLGLRHTHHSVERLDTPEIRGMVNKVPYLLRWEELS</sequence>
<name>RL30_ACIF2</name>
<accession>B7J485</accession>
<dbReference type="EMBL" id="CP001219">
    <property type="protein sequence ID" value="ACK78287.1"/>
    <property type="molecule type" value="Genomic_DNA"/>
</dbReference>
<dbReference type="RefSeq" id="WP_012536094.1">
    <property type="nucleotide sequence ID" value="NC_011761.1"/>
</dbReference>
<dbReference type="SMR" id="B7J485"/>
<dbReference type="STRING" id="243159.AFE_0345"/>
<dbReference type="PaxDb" id="243159-AFE_0345"/>
<dbReference type="GeneID" id="65279723"/>
<dbReference type="KEGG" id="afr:AFE_0345"/>
<dbReference type="eggNOG" id="COG1841">
    <property type="taxonomic scope" value="Bacteria"/>
</dbReference>
<dbReference type="HOGENOM" id="CLU_131047_1_4_6"/>
<dbReference type="Proteomes" id="UP000001362">
    <property type="component" value="Chromosome"/>
</dbReference>
<dbReference type="GO" id="GO:0022625">
    <property type="term" value="C:cytosolic large ribosomal subunit"/>
    <property type="evidence" value="ECO:0007669"/>
    <property type="project" value="TreeGrafter"/>
</dbReference>
<dbReference type="GO" id="GO:0003735">
    <property type="term" value="F:structural constituent of ribosome"/>
    <property type="evidence" value="ECO:0007669"/>
    <property type="project" value="InterPro"/>
</dbReference>
<dbReference type="GO" id="GO:0006412">
    <property type="term" value="P:translation"/>
    <property type="evidence" value="ECO:0007669"/>
    <property type="project" value="UniProtKB-UniRule"/>
</dbReference>
<dbReference type="CDD" id="cd01658">
    <property type="entry name" value="Ribosomal_L30"/>
    <property type="match status" value="1"/>
</dbReference>
<dbReference type="FunFam" id="3.30.1390.20:FF:000001">
    <property type="entry name" value="50S ribosomal protein L30"/>
    <property type="match status" value="1"/>
</dbReference>
<dbReference type="Gene3D" id="3.30.1390.20">
    <property type="entry name" value="Ribosomal protein L30, ferredoxin-like fold domain"/>
    <property type="match status" value="1"/>
</dbReference>
<dbReference type="HAMAP" id="MF_01371_B">
    <property type="entry name" value="Ribosomal_uL30_B"/>
    <property type="match status" value="1"/>
</dbReference>
<dbReference type="InterPro" id="IPR036919">
    <property type="entry name" value="Ribo_uL30_ferredoxin-like_sf"/>
</dbReference>
<dbReference type="InterPro" id="IPR005996">
    <property type="entry name" value="Ribosomal_uL30_bac-type"/>
</dbReference>
<dbReference type="InterPro" id="IPR016082">
    <property type="entry name" value="Ribosomal_uL30_ferredoxin-like"/>
</dbReference>
<dbReference type="NCBIfam" id="TIGR01308">
    <property type="entry name" value="rpmD_bact"/>
    <property type="match status" value="1"/>
</dbReference>
<dbReference type="PANTHER" id="PTHR15892:SF2">
    <property type="entry name" value="LARGE RIBOSOMAL SUBUNIT PROTEIN UL30M"/>
    <property type="match status" value="1"/>
</dbReference>
<dbReference type="PANTHER" id="PTHR15892">
    <property type="entry name" value="MITOCHONDRIAL RIBOSOMAL PROTEIN L30"/>
    <property type="match status" value="1"/>
</dbReference>
<dbReference type="Pfam" id="PF00327">
    <property type="entry name" value="Ribosomal_L30"/>
    <property type="match status" value="1"/>
</dbReference>
<dbReference type="PIRSF" id="PIRSF002211">
    <property type="entry name" value="Ribosomal_L30_bac-type"/>
    <property type="match status" value="1"/>
</dbReference>
<dbReference type="SUPFAM" id="SSF55129">
    <property type="entry name" value="Ribosomal protein L30p/L7e"/>
    <property type="match status" value="1"/>
</dbReference>
<gene>
    <name evidence="1" type="primary">rpmD</name>
    <name type="ordered locus">AFE_0345</name>
</gene>
<keyword id="KW-1185">Reference proteome</keyword>
<keyword id="KW-0687">Ribonucleoprotein</keyword>
<keyword id="KW-0689">Ribosomal protein</keyword>
<feature type="chain" id="PRO_1000144640" description="Large ribosomal subunit protein uL30">
    <location>
        <begin position="1"/>
        <end position="61"/>
    </location>
</feature>
<protein>
    <recommendedName>
        <fullName evidence="1">Large ribosomal subunit protein uL30</fullName>
    </recommendedName>
    <alternativeName>
        <fullName evidence="2">50S ribosomal protein L30</fullName>
    </alternativeName>
</protein>
<proteinExistence type="inferred from homology"/>
<evidence type="ECO:0000255" key="1">
    <source>
        <dbReference type="HAMAP-Rule" id="MF_01371"/>
    </source>
</evidence>
<evidence type="ECO:0000305" key="2"/>
<comment type="subunit">
    <text evidence="1">Part of the 50S ribosomal subunit.</text>
</comment>
<comment type="similarity">
    <text evidence="1">Belongs to the universal ribosomal protein uL30 family.</text>
</comment>
<reference key="1">
    <citation type="journal article" date="2008" name="BMC Genomics">
        <title>Acidithiobacillus ferrooxidans metabolism: from genome sequence to industrial applications.</title>
        <authorList>
            <person name="Valdes J."/>
            <person name="Pedroso I."/>
            <person name="Quatrini R."/>
            <person name="Dodson R.J."/>
            <person name="Tettelin H."/>
            <person name="Blake R. II"/>
            <person name="Eisen J.A."/>
            <person name="Holmes D.S."/>
        </authorList>
    </citation>
    <scope>NUCLEOTIDE SEQUENCE [LARGE SCALE GENOMIC DNA]</scope>
    <source>
        <strain>ATCC 23270 / DSM 14882 / CIP 104768 / NCIMB 8455</strain>
    </source>
</reference>
<organism>
    <name type="scientific">Acidithiobacillus ferrooxidans (strain ATCC 23270 / DSM 14882 / CIP 104768 / NCIMB 8455)</name>
    <name type="common">Ferrobacillus ferrooxidans (strain ATCC 23270)</name>
    <dbReference type="NCBI Taxonomy" id="243159"/>
    <lineage>
        <taxon>Bacteria</taxon>
        <taxon>Pseudomonadati</taxon>
        <taxon>Pseudomonadota</taxon>
        <taxon>Acidithiobacillia</taxon>
        <taxon>Acidithiobacillales</taxon>
        <taxon>Acidithiobacillaceae</taxon>
        <taxon>Acidithiobacillus</taxon>
    </lineage>
</organism>